<evidence type="ECO:0000255" key="1"/>
<evidence type="ECO:0000269" key="2">
    <source>
    </source>
</evidence>
<evidence type="ECO:0000269" key="3">
    <source>
    </source>
</evidence>
<evidence type="ECO:0000269" key="4">
    <source>
    </source>
</evidence>
<evidence type="ECO:0000269" key="5">
    <source>
    </source>
</evidence>
<evidence type="ECO:0000269" key="6">
    <source>
    </source>
</evidence>
<evidence type="ECO:0000269" key="7">
    <source>
    </source>
</evidence>
<evidence type="ECO:0000269" key="8">
    <source>
    </source>
</evidence>
<evidence type="ECO:0000269" key="9">
    <source ref="4"/>
</evidence>
<evidence type="ECO:0000305" key="10"/>
<evidence type="ECO:0007829" key="11">
    <source>
        <dbReference type="PDB" id="2LG5"/>
    </source>
</evidence>
<evidence type="ECO:0007829" key="12">
    <source>
        <dbReference type="PDB" id="2LG6"/>
    </source>
</evidence>
<protein>
    <recommendedName>
        <fullName>Gallinacin-2</fullName>
        <shortName>Gal-2</shortName>
    </recommendedName>
    <alternativeName>
        <fullName>Beta-defensin 2</fullName>
    </alternativeName>
</protein>
<organism>
    <name type="scientific">Gallus gallus</name>
    <name type="common">Chicken</name>
    <dbReference type="NCBI Taxonomy" id="9031"/>
    <lineage>
        <taxon>Eukaryota</taxon>
        <taxon>Metazoa</taxon>
        <taxon>Chordata</taxon>
        <taxon>Craniata</taxon>
        <taxon>Vertebrata</taxon>
        <taxon>Euteleostomi</taxon>
        <taxon>Archelosauria</taxon>
        <taxon>Archosauria</taxon>
        <taxon>Dinosauria</taxon>
        <taxon>Saurischia</taxon>
        <taxon>Theropoda</taxon>
        <taxon>Coelurosauria</taxon>
        <taxon>Aves</taxon>
        <taxon>Neognathae</taxon>
        <taxon>Galloanserae</taxon>
        <taxon>Galliformes</taxon>
        <taxon>Phasianidae</taxon>
        <taxon>Phasianinae</taxon>
        <taxon>Gallus</taxon>
    </lineage>
</organism>
<dbReference type="EMBL" id="AF033336">
    <property type="protein sequence ID" value="AAC36052.1"/>
    <property type="molecule type" value="mRNA"/>
</dbReference>
<dbReference type="EMBL" id="AY621317">
    <property type="protein sequence ID" value="AAT48926.1"/>
    <property type="molecule type" value="Genomic_DNA"/>
</dbReference>
<dbReference type="EMBL" id="AY672652">
    <property type="protein sequence ID" value="AAT76973.1"/>
    <property type="molecule type" value="Genomic_DNA"/>
</dbReference>
<dbReference type="EMBL" id="DQ677633">
    <property type="protein sequence ID" value="ABG73367.1"/>
    <property type="molecule type" value="mRNA"/>
</dbReference>
<dbReference type="EMBL" id="DQ858299">
    <property type="protein sequence ID" value="ABI48215.1"/>
    <property type="molecule type" value="mRNA"/>
</dbReference>
<dbReference type="EMBL" id="DQ858312">
    <property type="protein sequence ID" value="ABI48228.1"/>
    <property type="molecule type" value="mRNA"/>
</dbReference>
<dbReference type="EMBL" id="DQ858325">
    <property type="protein sequence ID" value="ABI48241.1"/>
    <property type="molecule type" value="mRNA"/>
</dbReference>
<dbReference type="EMBL" id="DQ858339">
    <property type="protein sequence ID" value="ABI48255.1"/>
    <property type="molecule type" value="mRNA"/>
</dbReference>
<dbReference type="PIR" id="S43284">
    <property type="entry name" value="S43284"/>
</dbReference>
<dbReference type="RefSeq" id="NP_001188328.1">
    <property type="nucleotide sequence ID" value="NM_001201399.1"/>
</dbReference>
<dbReference type="RefSeq" id="NP_990323.2">
    <property type="nucleotide sequence ID" value="NM_204992.2"/>
</dbReference>
<dbReference type="RefSeq" id="XP_015140577.1">
    <property type="nucleotide sequence ID" value="XM_015285091.1"/>
</dbReference>
<dbReference type="PDB" id="2LG5">
    <property type="method" value="NMR"/>
    <property type="chains" value="A=29-64"/>
</dbReference>
<dbReference type="PDB" id="2LG6">
    <property type="method" value="NMR"/>
    <property type="chains" value="A=29-64"/>
</dbReference>
<dbReference type="PDBsum" id="2LG5"/>
<dbReference type="PDBsum" id="2LG6"/>
<dbReference type="BMRB" id="P46158"/>
<dbReference type="SMR" id="P46158"/>
<dbReference type="FunCoup" id="P46158">
    <property type="interactions" value="78"/>
</dbReference>
<dbReference type="STRING" id="9031.ENSGALP00000030904"/>
<dbReference type="PaxDb" id="9031-ENSGALP00000030904"/>
<dbReference type="Ensembl" id="ENSGALT00010018708.1">
    <property type="protein sequence ID" value="ENSGALP00010010258.1"/>
    <property type="gene ID" value="ENSGALG00010007860.1"/>
</dbReference>
<dbReference type="GeneID" id="395840"/>
<dbReference type="KEGG" id="gga:395840"/>
<dbReference type="CTD" id="1673"/>
<dbReference type="VEuPathDB" id="HostDB:geneid_395840"/>
<dbReference type="eggNOG" id="ENOG502TD1D">
    <property type="taxonomic scope" value="Eukaryota"/>
</dbReference>
<dbReference type="GeneTree" id="ENSGT00530000068084"/>
<dbReference type="HOGENOM" id="CLU_189296_5_1_1"/>
<dbReference type="InParanoid" id="P46158"/>
<dbReference type="OMA" id="SCCKPPW"/>
<dbReference type="OrthoDB" id="9183727at2759"/>
<dbReference type="EvolutionaryTrace" id="P46158"/>
<dbReference type="PRO" id="PR:P46158"/>
<dbReference type="Proteomes" id="UP000000539">
    <property type="component" value="Chromosome 3"/>
</dbReference>
<dbReference type="GO" id="GO:0005615">
    <property type="term" value="C:extracellular space"/>
    <property type="evidence" value="ECO:0000318"/>
    <property type="project" value="GO_Central"/>
</dbReference>
<dbReference type="GO" id="GO:0030141">
    <property type="term" value="C:secretory granule"/>
    <property type="evidence" value="ECO:0000304"/>
    <property type="project" value="AgBase"/>
</dbReference>
<dbReference type="GO" id="GO:0031731">
    <property type="term" value="F:CCR6 chemokine receptor binding"/>
    <property type="evidence" value="ECO:0000318"/>
    <property type="project" value="GO_Central"/>
</dbReference>
<dbReference type="GO" id="GO:0042056">
    <property type="term" value="F:chemoattractant activity"/>
    <property type="evidence" value="ECO:0000318"/>
    <property type="project" value="GO_Central"/>
</dbReference>
<dbReference type="GO" id="GO:0060326">
    <property type="term" value="P:cell chemotaxis"/>
    <property type="evidence" value="ECO:0000318"/>
    <property type="project" value="GO_Central"/>
</dbReference>
<dbReference type="GO" id="GO:0006952">
    <property type="term" value="P:defense response"/>
    <property type="evidence" value="ECO:0000304"/>
    <property type="project" value="AgBase"/>
</dbReference>
<dbReference type="GO" id="GO:0042742">
    <property type="term" value="P:defense response to bacterium"/>
    <property type="evidence" value="ECO:0000318"/>
    <property type="project" value="GO_Central"/>
</dbReference>
<dbReference type="InterPro" id="IPR001855">
    <property type="entry name" value="Defensin_beta-like"/>
</dbReference>
<dbReference type="Pfam" id="PF00711">
    <property type="entry name" value="Defensin_beta"/>
    <property type="match status" value="1"/>
</dbReference>
<feature type="signal peptide" evidence="1">
    <location>
        <begin position="1"/>
        <end position="22"/>
    </location>
</feature>
<feature type="propeptide" id="PRO_0000007012" evidence="6 8">
    <location>
        <begin position="23"/>
        <end position="28"/>
    </location>
</feature>
<feature type="peptide" id="PRO_0000007013" description="Gallinacin-2">
    <location>
        <begin position="29"/>
        <end position="64"/>
    </location>
</feature>
<feature type="disulfide bond" evidence="7">
    <location>
        <begin position="31"/>
        <end position="57"/>
    </location>
</feature>
<feature type="disulfide bond" evidence="7">
    <location>
        <begin position="36"/>
        <end position="51"/>
    </location>
</feature>
<feature type="disulfide bond" evidence="7">
    <location>
        <begin position="41"/>
        <end position="58"/>
    </location>
</feature>
<feature type="sequence variant" description="In strain: Xinghua." evidence="3 9">
    <original>V</original>
    <variation>A</variation>
    <location>
        <position position="17"/>
    </location>
</feature>
<feature type="sequence variant" description="In strain: Xinghua." evidence="9">
    <original>G</original>
    <variation>R</variation>
    <location>
        <position position="20"/>
    </location>
</feature>
<feature type="mutagenesis site" description="Dramatic decrease in antimicrobial activity." evidence="7">
    <original>K</original>
    <variation>A</variation>
    <location>
        <position position="59"/>
    </location>
</feature>
<feature type="strand" evidence="11">
    <location>
        <begin position="31"/>
        <end position="36"/>
    </location>
</feature>
<feature type="strand" evidence="11">
    <location>
        <begin position="38"/>
        <end position="40"/>
    </location>
</feature>
<feature type="strand" evidence="11">
    <location>
        <begin position="42"/>
        <end position="44"/>
    </location>
</feature>
<feature type="strand" evidence="11">
    <location>
        <begin position="46"/>
        <end position="50"/>
    </location>
</feature>
<feature type="strand" evidence="11">
    <location>
        <begin position="56"/>
        <end position="59"/>
    </location>
</feature>
<feature type="helix" evidence="12">
    <location>
        <begin position="61"/>
        <end position="63"/>
    </location>
</feature>
<sequence>MRILYLLFSLLFLALQVSPGLSSPRRDMLFCKGGSCHFGGCPSHLIKVGSCFGFRSCCKWPWNA</sequence>
<accession>P46158</accession>
<accession>Q09MT0</accession>
<accession>Q0PWH3</accession>
<accession>Q6B9W8</accession>
<accession>Q6GXJ3</accession>
<name>GLL2_CHICK</name>
<reference key="1">
    <citation type="journal article" date="1998" name="Anim. Genet.">
        <title>Characterization of beta-defensin prepropeptide mRNA from chicken and turkey bone marrow.</title>
        <authorList>
            <person name="Brockus C.W."/>
            <person name="Harmon B.G."/>
            <person name="Jackwood M.W."/>
        </authorList>
    </citation>
    <scope>NUCLEOTIDE SEQUENCE [MRNA]</scope>
    <source>
        <tissue>Bone marrow</tissue>
    </source>
</reference>
<reference key="2">
    <citation type="journal article" date="2004" name="BMC Genomics">
        <title>A genome-wide screen identifies a single beta-defensin gene cluster in the chicken: implications for the origin and evolution of mammalian defensins.</title>
        <authorList>
            <person name="Xiao Y."/>
            <person name="Hughes A.L."/>
            <person name="Ando J."/>
            <person name="Matsuda Y."/>
            <person name="Cheng J.-F."/>
            <person name="Skinner-Noble D."/>
            <person name="Zhang G."/>
        </authorList>
    </citation>
    <scope>NUCLEOTIDE SEQUENCE [GENOMIC DNA / MRNA]</scope>
    <scope>VARIANT ALA-17</scope>
</reference>
<reference key="3">
    <citation type="submission" date="2004-06" db="EMBL/GenBank/DDBJ databases">
        <title>Chicken defensin gene structure.</title>
        <authorList>
            <person name="Zhang H."/>
            <person name="Bi Y."/>
            <person name="Cao Y."/>
            <person name="Chen X."/>
        </authorList>
    </citation>
    <scope>NUCLEOTIDE SEQUENCE [GENOMIC DNA]</scope>
</reference>
<reference key="4">
    <citation type="submission" date="2006-07" db="EMBL/GenBank/DDBJ databases">
        <title>Chicken beta-defensin in China chicken breeds.</title>
        <authorList>
            <person name="Chen Y."/>
            <person name="Cao Y."/>
            <person name="Xie Q."/>
            <person name="Bi Y."/>
            <person name="Chen J."/>
        </authorList>
    </citation>
    <scope>NUCLEOTIDE SEQUENCE [MRNA]</scope>
    <scope>VARIANTS ALA-17 AND ARG-20</scope>
    <source>
        <strain>Guangxi Huang</strain>
        <strain>Huiyang bearded</strain>
        <strain>Qingyuan Ma</strain>
        <strain>Taihe silkies</strain>
        <strain>Xinghua</strain>
    </source>
</reference>
<reference key="5">
    <citation type="journal article" date="1994" name="FEBS Lett.">
        <title>Gallinacins: cysteine-rich antimicrobial peptides of chicken leukocytes.</title>
        <authorList>
            <person name="Harwig S.S.L."/>
            <person name="Swiderek K.M."/>
            <person name="Kokryakov V.N."/>
            <person name="Tan L."/>
            <person name="Lee T.D."/>
            <person name="Panyutich E.A."/>
            <person name="Aleshina G.M."/>
            <person name="Shamova O.V."/>
            <person name="Lehrer R.I."/>
        </authorList>
    </citation>
    <scope>PROTEIN SEQUENCE OF 29-64</scope>
    <scope>FUNCTION</scope>
    <scope>MASS SPECTROMETRY</scope>
    <source>
        <strain>Broiler</strain>
        <tissue>Leukocyte</tissue>
    </source>
</reference>
<reference key="6">
    <citation type="journal article" date="2009" name="Poult. Sci.">
        <title>Direct screening identifies mature beta-defensin 2 in avian heterophils.</title>
        <authorList>
            <person name="Kannan L."/>
            <person name="Rath N.C."/>
            <person name="Liyanage R."/>
            <person name="Lay J.O. Jr."/>
        </authorList>
    </citation>
    <scope>PROTEIN SEQUENCE OF 29-43</scope>
    <scope>TISSUE SPECIFICITY</scope>
    <scope>MASS SPECTROMETRY</scope>
    <source>
        <strain>Broiler</strain>
        <tissue>Bone marrow</tissue>
        <tissue>Granulocyte</tissue>
    </source>
</reference>
<reference key="7">
    <citation type="journal article" date="2004" name="Immunogenetics">
        <title>Bioinformatic discovery and initial characterisation of nine novel antimicrobial peptide genes in the chicken.</title>
        <authorList>
            <person name="Lynn D.J."/>
            <person name="Higgs R."/>
            <person name="Gaines S."/>
            <person name="Tierney J."/>
            <person name="James T."/>
            <person name="Lloyd A.T."/>
            <person name="Fares M.A."/>
            <person name="Mulcahy G."/>
            <person name="O'Farrelly C."/>
        </authorList>
    </citation>
    <scope>TISSUE SPECIFICITY</scope>
</reference>
<reference key="8">
    <citation type="journal article" date="2006" name="J. Reprod. Dev.">
        <title>Effects of age, egg-laying activity, and Salmonella-inoculation on the expressions of gallinacin mRNA in the vagina of the hen oviduct.</title>
        <authorList>
            <person name="Yoshimura Y."/>
            <person name="Ohashi H."/>
            <person name="Subedi K."/>
            <person name="Nishibori M."/>
            <person name="Isobe N."/>
        </authorList>
    </citation>
    <scope>TISSUE SPECIFICITY</scope>
    <scope>DEVELOPMENTAL STAGE</scope>
    <scope>INDUCTION</scope>
</reference>
<reference key="9">
    <citation type="journal article" date="2007" name="Reproduction">
        <title>Changes in the expression of gallinacins, antimicrobial peptides, in ovarian follicles during follicular growth and in response to lipopolysaccharide in laying hens (Gallus domesticus).</title>
        <authorList>
            <person name="Subedi K."/>
            <person name="Isobe N."/>
            <person name="Nishibori M."/>
            <person name="Yoshimura Y."/>
        </authorList>
    </citation>
    <scope>TISSUE SPECIFICITY</scope>
    <scope>DEVELOPMENTAL STAGE</scope>
    <scope>INDUCTION</scope>
</reference>
<reference key="10">
    <citation type="journal article" date="2012" name="J. Biol. Chem.">
        <title>Initial insights into structure-activity relationships of avian defensins.</title>
        <authorList>
            <person name="Derache C."/>
            <person name="Meudal H."/>
            <person name="Aucagne V."/>
            <person name="Mark K.J."/>
            <person name="Cadene M."/>
            <person name="Delmas A.F."/>
            <person name="Lalmanach A.C."/>
            <person name="Landon C."/>
        </authorList>
    </citation>
    <scope>STRUCTURE BY NMR OF 29-64</scope>
    <scope>DISULFIDE BONDS</scope>
    <scope>MUTAGENESIS OF LYS-59</scope>
</reference>
<proteinExistence type="evidence at protein level"/>
<comment type="function">
    <text evidence="8">Potent antibacterial activity against the Gram-negative bacterium E.coli ML-35, and against the Gram-positive bacterium L.monocytogenes EGD. Lacks antifungal activity against C.albicans.</text>
</comment>
<comment type="subcellular location">
    <subcellularLocation>
        <location>Secreted</location>
    </subcellularLocation>
    <subcellularLocation>
        <location>Cytoplasmic granule</location>
    </subcellularLocation>
</comment>
<comment type="tissue specificity">
    <text evidence="2 4 5 6">Expressed in circulating heterophil granulocytes and bone marrow (at protein level). Strong expression in the bone marrow, lung and testis. Moderate expression in the bursa and intestine. Low expression in the cloaca, gall bladder, brain, pancreas, trachea, air sacs and spleen. Expressed in the vagina, ovarian stroma and the theca layer of the ovarian follicle, but not in the granulosa layer of the ovarian follicle.</text>
</comment>
<comment type="developmental stage">
    <text evidence="4 5">Detected in the theca layer of the ovarian follicle in the white follicle (WF), F1, F3, F5, and postovulatory follicle stages. In the vagina expression is higher in laying hens than in non-laying hens, and is higher in older laying hens than in young laying hens.</text>
</comment>
<comment type="induction">
    <text evidence="4 5">Not induced in the ovarian follicle by intravenous injection of LPS. Expression in cultured vaginal cells is increased by LPS and S.enteritidis.</text>
</comment>
<comment type="mass spectrometry"/>
<comment type="mass spectrometry"/>
<comment type="similarity">
    <text evidence="10">Belongs to the beta-defensin family.</text>
</comment>
<keyword id="KW-0002">3D-structure</keyword>
<keyword id="KW-0044">Antibiotic</keyword>
<keyword id="KW-0929">Antimicrobial</keyword>
<keyword id="KW-0211">Defensin</keyword>
<keyword id="KW-0903">Direct protein sequencing</keyword>
<keyword id="KW-1015">Disulfide bond</keyword>
<keyword id="KW-1185">Reference proteome</keyword>
<keyword id="KW-0964">Secreted</keyword>
<keyword id="KW-0732">Signal</keyword>
<gene>
    <name type="primary">GAL2</name>
</gene>